<gene>
    <name evidence="3" type="primary">RPS1B</name>
    <name type="ORF">SCRG_01835</name>
</gene>
<sequence>MAVGKNKRLSRGKKGLKKKVVDPFTRKEWFDIKAPSTFENRNVGKTLVNKSTGLKNASDALKGRVVEVCLADLQGSEDHSFRKVKLRVDEVQGKNLLTNFHGMDFTTDKLRSMVRKWQTLIEANVTVKTSDDYVLRIFAIAFTRKQANQVKRHSYAQSSHIRAIRKVISEILTREVQNSTLAQLTSKLIPEVINKEIENATKDIFPLQNIHVRKVKLLKQPKFDVGALMALHGEGSGEEKGKKVSGFKDEVLETV</sequence>
<name>RS3A2_YEAS1</name>
<evidence type="ECO:0000250" key="1">
    <source>
        <dbReference type="UniProtKB" id="P23248"/>
    </source>
</evidence>
<evidence type="ECO:0000250" key="2">
    <source>
        <dbReference type="UniProtKB" id="P33442"/>
    </source>
</evidence>
<evidence type="ECO:0000255" key="3">
    <source>
        <dbReference type="HAMAP-Rule" id="MF_03122"/>
    </source>
</evidence>
<evidence type="ECO:0000305" key="4"/>
<accession>B3LLJ2</accession>
<protein>
    <recommendedName>
        <fullName evidence="3">Small ribosomal subunit protein eS1B</fullName>
    </recommendedName>
    <alternativeName>
        <fullName evidence="4">40S ribosomal protein S1-B</fullName>
    </alternativeName>
</protein>
<keyword id="KW-0007">Acetylation</keyword>
<keyword id="KW-0963">Cytoplasm</keyword>
<keyword id="KW-1017">Isopeptide bond</keyword>
<keyword id="KW-0597">Phosphoprotein</keyword>
<keyword id="KW-0687">Ribonucleoprotein</keyword>
<keyword id="KW-0689">Ribosomal protein</keyword>
<keyword id="KW-0832">Ubl conjugation</keyword>
<proteinExistence type="inferred from homology"/>
<reference key="1">
    <citation type="submission" date="2005-03" db="EMBL/GenBank/DDBJ databases">
        <title>Annotation of the Saccharomyces cerevisiae RM11-1a genome.</title>
        <authorList>
            <consortium name="The Broad Institute Genome Sequencing Platform"/>
            <person name="Birren B.W."/>
            <person name="Lander E.S."/>
            <person name="Galagan J.E."/>
            <person name="Nusbaum C."/>
            <person name="Devon K."/>
            <person name="Cuomo C."/>
            <person name="Jaffe D.B."/>
            <person name="Butler J."/>
            <person name="Alvarez P."/>
            <person name="Gnerre S."/>
            <person name="Grabherr M."/>
            <person name="Kleber M."/>
            <person name="Mauceli E.W."/>
            <person name="Brockman W."/>
            <person name="MacCallum I.A."/>
            <person name="Rounsley S."/>
            <person name="Young S.K."/>
            <person name="LaButti K."/>
            <person name="Pushparaj V."/>
            <person name="DeCaprio D."/>
            <person name="Crawford M."/>
            <person name="Koehrsen M."/>
            <person name="Engels R."/>
            <person name="Montgomery P."/>
            <person name="Pearson M."/>
            <person name="Howarth C."/>
            <person name="Larson L."/>
            <person name="Luoma S."/>
            <person name="White J."/>
            <person name="O'Leary S."/>
            <person name="Kodira C.D."/>
            <person name="Zeng Q."/>
            <person name="Yandava C."/>
            <person name="Alvarado L."/>
            <person name="Pratt S."/>
            <person name="Kruglyak L."/>
        </authorList>
    </citation>
    <scope>NUCLEOTIDE SEQUENCE [LARGE SCALE GENOMIC DNA]</scope>
    <source>
        <strain>RM11-1a</strain>
    </source>
</reference>
<dbReference type="EMBL" id="CH408047">
    <property type="protein sequence ID" value="EDV11445.1"/>
    <property type="molecule type" value="Genomic_DNA"/>
</dbReference>
<dbReference type="SMR" id="B3LLJ2"/>
<dbReference type="HOGENOM" id="CLU_062507_0_0_1"/>
<dbReference type="OrthoDB" id="24542at4893"/>
<dbReference type="Proteomes" id="UP000008335">
    <property type="component" value="Unassembled WGS sequence"/>
</dbReference>
<dbReference type="GO" id="GO:0022627">
    <property type="term" value="C:cytosolic small ribosomal subunit"/>
    <property type="evidence" value="ECO:0007669"/>
    <property type="project" value="UniProtKB-UniRule"/>
</dbReference>
<dbReference type="GO" id="GO:0003735">
    <property type="term" value="F:structural constituent of ribosome"/>
    <property type="evidence" value="ECO:0007669"/>
    <property type="project" value="UniProtKB-UniRule"/>
</dbReference>
<dbReference type="GO" id="GO:0006412">
    <property type="term" value="P:translation"/>
    <property type="evidence" value="ECO:0007669"/>
    <property type="project" value="UniProtKB-UniRule"/>
</dbReference>
<dbReference type="HAMAP" id="MF_03122">
    <property type="entry name" value="Ribosomal_eS1_euk"/>
    <property type="match status" value="1"/>
</dbReference>
<dbReference type="InterPro" id="IPR001593">
    <property type="entry name" value="Ribosomal_eS1"/>
</dbReference>
<dbReference type="InterPro" id="IPR018281">
    <property type="entry name" value="Ribosomal_eS1_CS"/>
</dbReference>
<dbReference type="InterPro" id="IPR027500">
    <property type="entry name" value="Ribosomal_eS1_euk"/>
</dbReference>
<dbReference type="PANTHER" id="PTHR11830">
    <property type="entry name" value="40S RIBOSOMAL PROTEIN S3A"/>
    <property type="match status" value="1"/>
</dbReference>
<dbReference type="Pfam" id="PF01015">
    <property type="entry name" value="Ribosomal_S3Ae"/>
    <property type="match status" value="1"/>
</dbReference>
<dbReference type="SMART" id="SM01397">
    <property type="entry name" value="Ribosomal_S3Ae"/>
    <property type="match status" value="1"/>
</dbReference>
<dbReference type="PROSITE" id="PS01191">
    <property type="entry name" value="RIBOSOMAL_S3AE"/>
    <property type="match status" value="1"/>
</dbReference>
<organism>
    <name type="scientific">Saccharomyces cerevisiae (strain RM11-1a)</name>
    <name type="common">Baker's yeast</name>
    <dbReference type="NCBI Taxonomy" id="285006"/>
    <lineage>
        <taxon>Eukaryota</taxon>
        <taxon>Fungi</taxon>
        <taxon>Dikarya</taxon>
        <taxon>Ascomycota</taxon>
        <taxon>Saccharomycotina</taxon>
        <taxon>Saccharomycetes</taxon>
        <taxon>Saccharomycetales</taxon>
        <taxon>Saccharomycetaceae</taxon>
        <taxon>Saccharomyces</taxon>
    </lineage>
</organism>
<comment type="subunit">
    <text evidence="3">Component of the small ribosomal subunit. Mature ribosomes consist of a small (40S) and a large (60S) subunit. The 40S subunit contains about 33 different proteins and 1 molecule of RNA (18S). The 60S subunit contains about 49 different proteins and 3 molecules of RNA (25S, 5.8S and 5S).</text>
</comment>
<comment type="subcellular location">
    <subcellularLocation>
        <location evidence="3">Cytoplasm</location>
    </subcellularLocation>
</comment>
<comment type="similarity">
    <text evidence="3">Belongs to the eukaryotic ribosomal protein eS1 family.</text>
</comment>
<feature type="initiator methionine" description="Removed" evidence="3">
    <location>
        <position position="1"/>
    </location>
</feature>
<feature type="chain" id="PRO_0000389409" description="Small ribosomal subunit protein eS1B">
    <location>
        <begin position="2"/>
        <end position="255"/>
    </location>
</feature>
<feature type="modified residue" description="N-acetylalanine; partial" evidence="2 3">
    <location>
        <position position="2"/>
    </location>
</feature>
<feature type="modified residue" description="Phosphoserine" evidence="1">
    <location>
        <position position="245"/>
    </location>
</feature>
<feature type="modified residue" description="Phosphothreonine" evidence="1">
    <location>
        <position position="254"/>
    </location>
</feature>
<feature type="cross-link" description="Glycyl lysine isopeptide (Lys-Gly) (interchain with G-Cter in ubiquitin)" evidence="1">
    <location>
        <position position="248"/>
    </location>
</feature>